<gene>
    <name type="ordered locus">MmarC6_1461</name>
</gene>
<name>HMGCS_METM6</name>
<dbReference type="EC" id="2.3.3.10" evidence="1"/>
<dbReference type="EMBL" id="CP000867">
    <property type="protein sequence ID" value="ABX02274.1"/>
    <property type="molecule type" value="Genomic_DNA"/>
</dbReference>
<dbReference type="SMR" id="A9AAA1"/>
<dbReference type="STRING" id="444158.MmarC6_1461"/>
<dbReference type="KEGG" id="mmx:MmarC6_1461"/>
<dbReference type="eggNOG" id="arCOG01767">
    <property type="taxonomic scope" value="Archaea"/>
</dbReference>
<dbReference type="HOGENOM" id="CLU_039592_7_0_2"/>
<dbReference type="OrthoDB" id="5812at2157"/>
<dbReference type="PhylomeDB" id="A9AAA1"/>
<dbReference type="UniPathway" id="UPA00058">
    <property type="reaction ID" value="UER00102"/>
</dbReference>
<dbReference type="GO" id="GO:0003985">
    <property type="term" value="F:acetyl-CoA C-acetyltransferase activity"/>
    <property type="evidence" value="ECO:0007669"/>
    <property type="project" value="UniProtKB-UniRule"/>
</dbReference>
<dbReference type="GO" id="GO:0004421">
    <property type="term" value="F:hydroxymethylglutaryl-CoA synthase activity"/>
    <property type="evidence" value="ECO:0007669"/>
    <property type="project" value="InterPro"/>
</dbReference>
<dbReference type="GO" id="GO:0010142">
    <property type="term" value="P:farnesyl diphosphate biosynthetic process, mevalonate pathway"/>
    <property type="evidence" value="ECO:0007669"/>
    <property type="project" value="TreeGrafter"/>
</dbReference>
<dbReference type="GO" id="GO:0019287">
    <property type="term" value="P:isopentenyl diphosphate biosynthetic process, mevalonate pathway"/>
    <property type="evidence" value="ECO:0007669"/>
    <property type="project" value="UniProtKB-UniRule"/>
</dbReference>
<dbReference type="CDD" id="cd00827">
    <property type="entry name" value="init_cond_enzymes"/>
    <property type="match status" value="1"/>
</dbReference>
<dbReference type="Gene3D" id="3.40.47.10">
    <property type="match status" value="1"/>
</dbReference>
<dbReference type="HAMAP" id="MF_01409">
    <property type="entry name" value="HMG_CoA_synth_arch"/>
    <property type="match status" value="1"/>
</dbReference>
<dbReference type="InterPro" id="IPR013747">
    <property type="entry name" value="ACP_syn_III_C"/>
</dbReference>
<dbReference type="InterPro" id="IPR004656">
    <property type="entry name" value="HMG_CoA_Synthase"/>
</dbReference>
<dbReference type="InterPro" id="IPR016039">
    <property type="entry name" value="Thiolase-like"/>
</dbReference>
<dbReference type="NCBIfam" id="TIGR00748">
    <property type="entry name" value="HMG_CoA_syn_Arc"/>
    <property type="match status" value="1"/>
</dbReference>
<dbReference type="NCBIfam" id="NF003274">
    <property type="entry name" value="PRK04262.1"/>
    <property type="match status" value="1"/>
</dbReference>
<dbReference type="PANTHER" id="PTHR43323">
    <property type="entry name" value="3-HYDROXY-3-METHYLGLUTARYL COENZYME A SYNTHASE"/>
    <property type="match status" value="1"/>
</dbReference>
<dbReference type="PANTHER" id="PTHR43323:SF2">
    <property type="entry name" value="HYDROXYMETHYLGLUTARYL-COA SYNTHASE"/>
    <property type="match status" value="1"/>
</dbReference>
<dbReference type="Pfam" id="PF08541">
    <property type="entry name" value="ACP_syn_III_C"/>
    <property type="match status" value="1"/>
</dbReference>
<dbReference type="SUPFAM" id="SSF53901">
    <property type="entry name" value="Thiolase-like"/>
    <property type="match status" value="2"/>
</dbReference>
<reference key="1">
    <citation type="submission" date="2007-10" db="EMBL/GenBank/DDBJ databases">
        <title>Complete sequence of Methanococcus maripaludis C6.</title>
        <authorList>
            <consortium name="US DOE Joint Genome Institute"/>
            <person name="Copeland A."/>
            <person name="Lucas S."/>
            <person name="Lapidus A."/>
            <person name="Barry K."/>
            <person name="Glavina del Rio T."/>
            <person name="Dalin E."/>
            <person name="Tice H."/>
            <person name="Pitluck S."/>
            <person name="Clum A."/>
            <person name="Schmutz J."/>
            <person name="Larimer F."/>
            <person name="Land M."/>
            <person name="Hauser L."/>
            <person name="Kyrpides N."/>
            <person name="Mikhailova N."/>
            <person name="Sieprawska-Lupa M."/>
            <person name="Whitman W.B."/>
            <person name="Richardson P."/>
        </authorList>
    </citation>
    <scope>NUCLEOTIDE SEQUENCE [LARGE SCALE GENOMIC DNA]</scope>
    <source>
        <strain>C6 / ATCC BAA-1332</strain>
    </source>
</reference>
<accession>A9AAA1</accession>
<feature type="chain" id="PRO_1000145509" description="Hydroxymethylglutaryl-CoA synthase">
    <location>
        <begin position="1"/>
        <end position="349"/>
    </location>
</feature>
<feature type="active site" description="Proton donor/acceptor" evidence="1">
    <location>
        <position position="82"/>
    </location>
</feature>
<feature type="active site" description="Acyl-thioester intermediate" evidence="1">
    <location>
        <position position="114"/>
    </location>
</feature>
<feature type="active site" description="Proton donor/acceptor" evidence="1">
    <location>
        <position position="238"/>
    </location>
</feature>
<feature type="binding site" evidence="1">
    <location>
        <position position="30"/>
    </location>
    <ligand>
        <name>(3S)-3-hydroxy-3-methylglutaryl-CoA</name>
        <dbReference type="ChEBI" id="CHEBI:43074"/>
    </ligand>
</feature>
<feature type="binding site" evidence="1">
    <location>
        <position position="31"/>
    </location>
    <ligand>
        <name>(3S)-3-hydroxy-3-methylglutaryl-CoA</name>
        <dbReference type="ChEBI" id="CHEBI:43074"/>
    </ligand>
</feature>
<feature type="binding site" evidence="1">
    <location>
        <position position="114"/>
    </location>
    <ligand>
        <name>(3S)-3-hydroxy-3-methylglutaryl-CoA</name>
        <dbReference type="ChEBI" id="CHEBI:43074"/>
    </ligand>
</feature>
<feature type="binding site" evidence="1">
    <location>
        <position position="155"/>
    </location>
    <ligand>
        <name>(3S)-3-hydroxy-3-methylglutaryl-CoA</name>
        <dbReference type="ChEBI" id="CHEBI:43074"/>
    </ligand>
</feature>
<feature type="binding site" evidence="1">
    <location>
        <position position="203"/>
    </location>
    <ligand>
        <name>CoA</name>
        <dbReference type="ChEBI" id="CHEBI:57287"/>
        <note>ligand shared with acetoacetyl-CoA thiolase</note>
    </ligand>
</feature>
<feature type="binding site" evidence="1">
    <location>
        <position position="205"/>
    </location>
    <ligand>
        <name>(3S)-3-hydroxy-3-methylglutaryl-CoA</name>
        <dbReference type="ChEBI" id="CHEBI:43074"/>
    </ligand>
</feature>
<feature type="binding site" evidence="1">
    <location>
        <position position="238"/>
    </location>
    <ligand>
        <name>(3S)-3-hydroxy-3-methylglutaryl-CoA</name>
        <dbReference type="ChEBI" id="CHEBI:43074"/>
    </ligand>
</feature>
<feature type="binding site" evidence="1">
    <location>
        <position position="243"/>
    </location>
    <ligand>
        <name>CoA</name>
        <dbReference type="ChEBI" id="CHEBI:57287"/>
        <note>ligand shared with acetoacetyl-CoA thiolase</note>
    </ligand>
</feature>
<feature type="binding site" evidence="1">
    <location>
        <position position="270"/>
    </location>
    <ligand>
        <name>(3S)-3-hydroxy-3-methylglutaryl-CoA</name>
        <dbReference type="ChEBI" id="CHEBI:43074"/>
    </ligand>
</feature>
<feature type="binding site" evidence="1">
    <location>
        <position position="300"/>
    </location>
    <ligand>
        <name>(3S)-3-hydroxy-3-methylglutaryl-CoA</name>
        <dbReference type="ChEBI" id="CHEBI:43074"/>
    </ligand>
</feature>
<sequence>MKEVGIVGYGSDLPKYRIKAEDIAGAWGKDAQAIKRGLIVNEKSVPGPDEDTATISVQAARRALSRAGINPKDIGAVYVGSESHPYAVKPTSGIVAEACGVSPDFTAADLEFACKAGTAGIQMCMGLVGSGMMEYAMAVGADTAQGAPGDALEYTAAAGGAAYIIGAKKEELIAKFNGTYSYTTDTPDFWRREHEHYPKHGGRFTGEPAYFKHVLNGAKGMMAKMDTTAKDYDYCVFHQPNGKFYITAAKQLGFTEEQYKYGLLTPYLGNTYSGAVPLGLSNILDHAKADDRIFVVSYGSGAGSDAFDITVTDRISEVVDKEITTEKLLESKKYVDYAVYLKYRGKIRM</sequence>
<organism>
    <name type="scientific">Methanococcus maripaludis (strain C6 / ATCC BAA-1332)</name>
    <dbReference type="NCBI Taxonomy" id="444158"/>
    <lineage>
        <taxon>Archaea</taxon>
        <taxon>Methanobacteriati</taxon>
        <taxon>Methanobacteriota</taxon>
        <taxon>Methanomada group</taxon>
        <taxon>Methanococci</taxon>
        <taxon>Methanococcales</taxon>
        <taxon>Methanococcaceae</taxon>
        <taxon>Methanococcus</taxon>
    </lineage>
</organism>
<proteinExistence type="inferred from homology"/>
<keyword id="KW-0012">Acyltransferase</keyword>
<keyword id="KW-0414">Isoprene biosynthesis</keyword>
<keyword id="KW-0808">Transferase</keyword>
<evidence type="ECO:0000255" key="1">
    <source>
        <dbReference type="HAMAP-Rule" id="MF_01409"/>
    </source>
</evidence>
<comment type="function">
    <text evidence="1">Catalyzes the condensation of acetyl-CoA with acetoacetyl-CoA to form 3-hydroxy-3-methylglutaryl-CoA (HMG-CoA). Functions in the mevalonate (MVA) pathway leading to isopentenyl diphosphate (IPP), a key precursor for the biosynthesis of isoprenoid compounds that are building blocks of archaeal membrane lipids.</text>
</comment>
<comment type="catalytic activity">
    <reaction evidence="1">
        <text>acetoacetyl-CoA + acetyl-CoA + H2O = (3S)-3-hydroxy-3-methylglutaryl-CoA + CoA + H(+)</text>
        <dbReference type="Rhea" id="RHEA:10188"/>
        <dbReference type="ChEBI" id="CHEBI:15377"/>
        <dbReference type="ChEBI" id="CHEBI:15378"/>
        <dbReference type="ChEBI" id="CHEBI:43074"/>
        <dbReference type="ChEBI" id="CHEBI:57286"/>
        <dbReference type="ChEBI" id="CHEBI:57287"/>
        <dbReference type="ChEBI" id="CHEBI:57288"/>
        <dbReference type="EC" id="2.3.3.10"/>
    </reaction>
    <physiologicalReaction direction="left-to-right" evidence="1">
        <dbReference type="Rhea" id="RHEA:10189"/>
    </physiologicalReaction>
</comment>
<comment type="pathway">
    <text evidence="1">Metabolic intermediate biosynthesis; (R)-mevalonate biosynthesis; (R)-mevalonate from acetyl-CoA: step 2/3.</text>
</comment>
<comment type="subunit">
    <text evidence="1">Interacts with acetoacetyl-CoA thiolase that catalyzes the precedent step in the pathway and with a DUF35 protein. The acetoacetyl-CoA thiolase/HMG-CoA synthase complex channels the intermediate via a fused CoA-binding site, which allows for efficient coupling of the endergonic thiolase reaction with the exergonic HMGCS reaction.</text>
</comment>
<comment type="similarity">
    <text evidence="1">Belongs to the thiolase-like superfamily. Archaeal HMG-CoA synthase family.</text>
</comment>
<protein>
    <recommendedName>
        <fullName evidence="1">Hydroxymethylglutaryl-CoA synthase</fullName>
        <shortName evidence="1">HMG-CoA synthase</shortName>
        <shortName evidence="1">HMGCS</shortName>
        <ecNumber evidence="1">2.3.3.10</ecNumber>
    </recommendedName>
</protein>